<accession>B3CR58</accession>
<feature type="chain" id="PRO_1000099145" description="GTPase Der">
    <location>
        <begin position="1"/>
        <end position="454"/>
    </location>
</feature>
<feature type="domain" description="EngA-type G 1">
    <location>
        <begin position="4"/>
        <end position="167"/>
    </location>
</feature>
<feature type="domain" description="EngA-type G 2">
    <location>
        <begin position="188"/>
        <end position="363"/>
    </location>
</feature>
<feature type="domain" description="KH-like" evidence="1">
    <location>
        <begin position="364"/>
        <end position="450"/>
    </location>
</feature>
<feature type="binding site" evidence="1">
    <location>
        <begin position="10"/>
        <end position="17"/>
    </location>
    <ligand>
        <name>GTP</name>
        <dbReference type="ChEBI" id="CHEBI:37565"/>
        <label>1</label>
    </ligand>
</feature>
<feature type="binding site" evidence="1">
    <location>
        <begin position="56"/>
        <end position="60"/>
    </location>
    <ligand>
        <name>GTP</name>
        <dbReference type="ChEBI" id="CHEBI:37565"/>
        <label>1</label>
    </ligand>
</feature>
<feature type="binding site" evidence="1">
    <location>
        <begin position="121"/>
        <end position="124"/>
    </location>
    <ligand>
        <name>GTP</name>
        <dbReference type="ChEBI" id="CHEBI:37565"/>
        <label>1</label>
    </ligand>
</feature>
<feature type="binding site" evidence="1">
    <location>
        <begin position="194"/>
        <end position="201"/>
    </location>
    <ligand>
        <name>GTP</name>
        <dbReference type="ChEBI" id="CHEBI:37565"/>
        <label>2</label>
    </ligand>
</feature>
<feature type="binding site" evidence="1">
    <location>
        <begin position="241"/>
        <end position="245"/>
    </location>
    <ligand>
        <name>GTP</name>
        <dbReference type="ChEBI" id="CHEBI:37565"/>
        <label>2</label>
    </ligand>
</feature>
<feature type="binding site" evidence="1">
    <location>
        <begin position="306"/>
        <end position="309"/>
    </location>
    <ligand>
        <name>GTP</name>
        <dbReference type="ChEBI" id="CHEBI:37565"/>
        <label>2</label>
    </ligand>
</feature>
<protein>
    <recommendedName>
        <fullName evidence="1">GTPase Der</fullName>
    </recommendedName>
    <alternativeName>
        <fullName evidence="1">GTP-binding protein EngA</fullName>
    </alternativeName>
</protein>
<gene>
    <name evidence="1" type="primary">der</name>
    <name type="synonym">engA</name>
    <name type="ordered locus">OTT_0507</name>
</gene>
<reference key="1">
    <citation type="journal article" date="2008" name="DNA Res.">
        <title>The whole-genome sequencing of the obligate intracellular bacterium Orientia tsutsugamushi revealed massive gene amplification during reductive genome evolution.</title>
        <authorList>
            <person name="Nakayama K."/>
            <person name="Yamashita A."/>
            <person name="Kurokawa K."/>
            <person name="Morimoto T."/>
            <person name="Ogawa M."/>
            <person name="Fukuhara M."/>
            <person name="Urakami H."/>
            <person name="Ohnishi M."/>
            <person name="Uchiyama I."/>
            <person name="Ogura Y."/>
            <person name="Ooka T."/>
            <person name="Oshima K."/>
            <person name="Tamura A."/>
            <person name="Hattori M."/>
            <person name="Hayashi T."/>
        </authorList>
    </citation>
    <scope>NUCLEOTIDE SEQUENCE [LARGE SCALE GENOMIC DNA]</scope>
    <source>
        <strain>Ikeda</strain>
    </source>
</reference>
<proteinExistence type="inferred from homology"/>
<evidence type="ECO:0000255" key="1">
    <source>
        <dbReference type="HAMAP-Rule" id="MF_00195"/>
    </source>
</evidence>
<dbReference type="EMBL" id="AP008981">
    <property type="protein sequence ID" value="BAG39965.1"/>
    <property type="molecule type" value="Genomic_DNA"/>
</dbReference>
<dbReference type="RefSeq" id="WP_012461161.1">
    <property type="nucleotide sequence ID" value="NC_010793.1"/>
</dbReference>
<dbReference type="SMR" id="B3CR58"/>
<dbReference type="KEGG" id="ott:OTT_0507"/>
<dbReference type="HOGENOM" id="CLU_016077_5_0_5"/>
<dbReference type="OrthoDB" id="9805918at2"/>
<dbReference type="Proteomes" id="UP000001033">
    <property type="component" value="Chromosome"/>
</dbReference>
<dbReference type="GO" id="GO:0005525">
    <property type="term" value="F:GTP binding"/>
    <property type="evidence" value="ECO:0007669"/>
    <property type="project" value="UniProtKB-UniRule"/>
</dbReference>
<dbReference type="GO" id="GO:0042254">
    <property type="term" value="P:ribosome biogenesis"/>
    <property type="evidence" value="ECO:0007669"/>
    <property type="project" value="UniProtKB-KW"/>
</dbReference>
<dbReference type="CDD" id="cd01894">
    <property type="entry name" value="EngA1"/>
    <property type="match status" value="1"/>
</dbReference>
<dbReference type="CDD" id="cd01895">
    <property type="entry name" value="EngA2"/>
    <property type="match status" value="1"/>
</dbReference>
<dbReference type="FunFam" id="3.30.300.20:FF:000004">
    <property type="entry name" value="GTPase Der"/>
    <property type="match status" value="1"/>
</dbReference>
<dbReference type="Gene3D" id="3.30.300.20">
    <property type="match status" value="1"/>
</dbReference>
<dbReference type="Gene3D" id="3.40.50.300">
    <property type="entry name" value="P-loop containing nucleotide triphosphate hydrolases"/>
    <property type="match status" value="2"/>
</dbReference>
<dbReference type="HAMAP" id="MF_00195">
    <property type="entry name" value="GTPase_Der"/>
    <property type="match status" value="1"/>
</dbReference>
<dbReference type="InterPro" id="IPR031166">
    <property type="entry name" value="G_ENGA"/>
</dbReference>
<dbReference type="InterPro" id="IPR006073">
    <property type="entry name" value="GTP-bd"/>
</dbReference>
<dbReference type="InterPro" id="IPR016484">
    <property type="entry name" value="GTPase_Der"/>
</dbReference>
<dbReference type="InterPro" id="IPR032859">
    <property type="entry name" value="KH_dom-like"/>
</dbReference>
<dbReference type="InterPro" id="IPR015946">
    <property type="entry name" value="KH_dom-like_a/b"/>
</dbReference>
<dbReference type="InterPro" id="IPR027417">
    <property type="entry name" value="P-loop_NTPase"/>
</dbReference>
<dbReference type="InterPro" id="IPR005225">
    <property type="entry name" value="Small_GTP-bd"/>
</dbReference>
<dbReference type="NCBIfam" id="TIGR03594">
    <property type="entry name" value="GTPase_EngA"/>
    <property type="match status" value="1"/>
</dbReference>
<dbReference type="NCBIfam" id="TIGR00231">
    <property type="entry name" value="small_GTP"/>
    <property type="match status" value="2"/>
</dbReference>
<dbReference type="PANTHER" id="PTHR43834">
    <property type="entry name" value="GTPASE DER"/>
    <property type="match status" value="1"/>
</dbReference>
<dbReference type="PANTHER" id="PTHR43834:SF6">
    <property type="entry name" value="GTPASE DER"/>
    <property type="match status" value="1"/>
</dbReference>
<dbReference type="Pfam" id="PF14714">
    <property type="entry name" value="KH_dom-like"/>
    <property type="match status" value="1"/>
</dbReference>
<dbReference type="Pfam" id="PF01926">
    <property type="entry name" value="MMR_HSR1"/>
    <property type="match status" value="2"/>
</dbReference>
<dbReference type="PIRSF" id="PIRSF006485">
    <property type="entry name" value="GTP-binding_EngA"/>
    <property type="match status" value="1"/>
</dbReference>
<dbReference type="PRINTS" id="PR00326">
    <property type="entry name" value="GTP1OBG"/>
</dbReference>
<dbReference type="SUPFAM" id="SSF52540">
    <property type="entry name" value="P-loop containing nucleoside triphosphate hydrolases"/>
    <property type="match status" value="2"/>
</dbReference>
<dbReference type="PROSITE" id="PS51712">
    <property type="entry name" value="G_ENGA"/>
    <property type="match status" value="2"/>
</dbReference>
<sequence length="454" mass="51130">MPQAIVALVGKPNVGKSTLFNRLSLREKSIVHDLPGITRDRKYAKANLFSDLIVVDTPGLEFAAAGSLEFNMMQQSLVAINEAHIICFVVDAITGILPIDEECANLIRKHNKQSSTILVINKTEKPIILDKSYYKLGFSESVCISAKHGQGIYELGDIIQNILSEDKKINFLTTTNTKCEYNQQRPELELAIVGRPNCGKSTFINAILNEDRVLTGPQSGLTRNSVEIDWEYYGHLIRLVDTAGVRKKNAVTQSCELLSVNDTFKTIRFANIVVVMIDATRGLEQQDLSIISYAVNEGRGIVLVVNKWDLIKKKKEFQKELSRLIAYSVFQIKGINPIYISAKEKFNLESVLQQCVLTYASWQKRVTTGTLNQWLAKAMSNSPLPFQSHGKRVKIKYCTQTKARPPTIKLFCNNIESIDESYKRYLINNFKLNFDIAAGVPVRLSFVKGKNPYR</sequence>
<keyword id="KW-0342">GTP-binding</keyword>
<keyword id="KW-0547">Nucleotide-binding</keyword>
<keyword id="KW-0677">Repeat</keyword>
<keyword id="KW-0690">Ribosome biogenesis</keyword>
<organism>
    <name type="scientific">Orientia tsutsugamushi (strain Ikeda)</name>
    <name type="common">Rickettsia tsutsugamushi</name>
    <dbReference type="NCBI Taxonomy" id="334380"/>
    <lineage>
        <taxon>Bacteria</taxon>
        <taxon>Pseudomonadati</taxon>
        <taxon>Pseudomonadota</taxon>
        <taxon>Alphaproteobacteria</taxon>
        <taxon>Rickettsiales</taxon>
        <taxon>Rickettsiaceae</taxon>
        <taxon>Rickettsieae</taxon>
        <taxon>Orientia</taxon>
    </lineage>
</organism>
<name>DER_ORITI</name>
<comment type="function">
    <text evidence="1">GTPase that plays an essential role in the late steps of ribosome biogenesis.</text>
</comment>
<comment type="subunit">
    <text evidence="1">Associates with the 50S ribosomal subunit.</text>
</comment>
<comment type="similarity">
    <text evidence="1">Belongs to the TRAFAC class TrmE-Era-EngA-EngB-Septin-like GTPase superfamily. EngA (Der) GTPase family.</text>
</comment>